<sequence>MADKSTEVEKAIDPIIDLGNLLFIDREPIQGDASEGLEERARKNTQLLFNNIWQLEQKRVEEAIIVTLPPATYRLPREKRLPEKKEPTKWEKYAAEKGIEKRKKDKKVFDEATKEWKPTYGYRRGNDDTKDWLIEIPDNAEDPNKDFFAERREKKKERVAKNDMQRMKNLARQMKTTVKSGPSTEKMIGVGVDAKEKSKQQVRFAVDRAKLATASAGKFQEGLKGEKANVKTGKKRKFEANEAPVSGEKERALQILQRMKSKKAKIVEEKAAAVAGPLREKKEKSERKGAKDQTRQKSQIHRQQWFKNKVDGKKKGTGGAGKKGANKAKARKG</sequence>
<feature type="chain" id="PRO_0000185376" description="Ribosome biogenesis regulatory protein homolog">
    <location>
        <begin position="1"/>
        <end position="333"/>
    </location>
</feature>
<feature type="region of interest" description="Disordered" evidence="2">
    <location>
        <begin position="227"/>
        <end position="248"/>
    </location>
</feature>
<feature type="region of interest" description="Disordered" evidence="2">
    <location>
        <begin position="271"/>
        <end position="333"/>
    </location>
</feature>
<feature type="compositionally biased region" description="Basic and acidic residues" evidence="2">
    <location>
        <begin position="278"/>
        <end position="295"/>
    </location>
</feature>
<feature type="compositionally biased region" description="Basic residues" evidence="2">
    <location>
        <begin position="324"/>
        <end position="333"/>
    </location>
</feature>
<evidence type="ECO:0000250" key="1">
    <source>
        <dbReference type="UniProtKB" id="Q15050"/>
    </source>
</evidence>
<evidence type="ECO:0000256" key="2">
    <source>
        <dbReference type="SAM" id="MobiDB-lite"/>
    </source>
</evidence>
<evidence type="ECO:0000305" key="3"/>
<evidence type="ECO:0000312" key="4">
    <source>
        <dbReference type="WormBase" id="C15H11.9"/>
    </source>
</evidence>
<keyword id="KW-0539">Nucleus</keyword>
<keyword id="KW-1185">Reference proteome</keyword>
<keyword id="KW-0690">Ribosome biogenesis</keyword>
<organism>
    <name type="scientific">Caenorhabditis elegans</name>
    <dbReference type="NCBI Taxonomy" id="6239"/>
    <lineage>
        <taxon>Eukaryota</taxon>
        <taxon>Metazoa</taxon>
        <taxon>Ecdysozoa</taxon>
        <taxon>Nematoda</taxon>
        <taxon>Chromadorea</taxon>
        <taxon>Rhabditida</taxon>
        <taxon>Rhabditina</taxon>
        <taxon>Rhabditomorpha</taxon>
        <taxon>Rhabditoidea</taxon>
        <taxon>Rhabditidae</taxon>
        <taxon>Peloderinae</taxon>
        <taxon>Caenorhabditis</taxon>
    </lineage>
</organism>
<protein>
    <recommendedName>
        <fullName>Ribosome biogenesis regulatory protein homolog</fullName>
    </recommendedName>
</protein>
<proteinExistence type="inferred from homology"/>
<reference key="1">
    <citation type="journal article" date="1998" name="Science">
        <title>Genome sequence of the nematode C. elegans: a platform for investigating biology.</title>
        <authorList>
            <consortium name="The C. elegans sequencing consortium"/>
        </authorList>
    </citation>
    <scope>NUCLEOTIDE SEQUENCE [LARGE SCALE GENOMIC DNA]</scope>
    <source>
        <strain>Bristol N2</strain>
    </source>
</reference>
<gene>
    <name evidence="4" type="primary">rrsr-1</name>
    <name evidence="4" type="ORF">C15H11.9</name>
</gene>
<name>RRS1_CAEEL</name>
<accession>Q9XVT0</accession>
<dbReference type="EMBL" id="Z81035">
    <property type="protein sequence ID" value="CAB02731.1"/>
    <property type="molecule type" value="Genomic_DNA"/>
</dbReference>
<dbReference type="PIR" id="T19313">
    <property type="entry name" value="T19313"/>
</dbReference>
<dbReference type="SMR" id="Q9XVT0"/>
<dbReference type="BioGRID" id="44946">
    <property type="interactions" value="12"/>
</dbReference>
<dbReference type="DIP" id="DIP-24987N"/>
<dbReference type="FunCoup" id="Q9XVT0">
    <property type="interactions" value="2351"/>
</dbReference>
<dbReference type="STRING" id="6239.C15H11.9.1"/>
<dbReference type="PaxDb" id="6239-C15H11.9"/>
<dbReference type="PeptideAtlas" id="Q9XVT0"/>
<dbReference type="EnsemblMetazoa" id="C15H11.9.1">
    <property type="protein sequence ID" value="C15H11.9.1"/>
    <property type="gene ID" value="WBGene00007617"/>
</dbReference>
<dbReference type="KEGG" id="cel:CELE_C15H11.9"/>
<dbReference type="UCSC" id="C15H11.9.1">
    <property type="organism name" value="c. elegans"/>
</dbReference>
<dbReference type="AGR" id="WB:WBGene00007617"/>
<dbReference type="CTD" id="179942"/>
<dbReference type="WormBase" id="C15H11.9">
    <property type="protein sequence ID" value="CE08186"/>
    <property type="gene ID" value="WBGene00007617"/>
    <property type="gene designation" value="rrsr-1"/>
</dbReference>
<dbReference type="eggNOG" id="KOG1765">
    <property type="taxonomic scope" value="Eukaryota"/>
</dbReference>
<dbReference type="GeneTree" id="ENSGT00390000005213"/>
<dbReference type="HOGENOM" id="CLU_065163_1_0_1"/>
<dbReference type="InParanoid" id="Q9XVT0"/>
<dbReference type="OMA" id="ACDKNRI"/>
<dbReference type="OrthoDB" id="28455at2759"/>
<dbReference type="PhylomeDB" id="Q9XVT0"/>
<dbReference type="PRO" id="PR:Q9XVT0"/>
<dbReference type="Proteomes" id="UP000001940">
    <property type="component" value="Chromosome V"/>
</dbReference>
<dbReference type="Bgee" id="WBGene00007617">
    <property type="expression patterns" value="Expressed in larva and 4 other cell types or tissues"/>
</dbReference>
<dbReference type="GO" id="GO:0005730">
    <property type="term" value="C:nucleolus"/>
    <property type="evidence" value="ECO:0000318"/>
    <property type="project" value="GO_Central"/>
</dbReference>
<dbReference type="GO" id="GO:0030687">
    <property type="term" value="C:preribosome, large subunit precursor"/>
    <property type="evidence" value="ECO:0000318"/>
    <property type="project" value="GO_Central"/>
</dbReference>
<dbReference type="GO" id="GO:0000447">
    <property type="term" value="P:endonucleolytic cleavage in ITS1 to separate SSU-rRNA from 5.8S rRNA and LSU-rRNA from tricistronic rRNA transcript (SSU-rRNA, 5.8S rRNA, LSU-rRNA)"/>
    <property type="evidence" value="ECO:0000318"/>
    <property type="project" value="GO_Central"/>
</dbReference>
<dbReference type="GO" id="GO:0000027">
    <property type="term" value="P:ribosomal large subunit assembly"/>
    <property type="evidence" value="ECO:0000250"/>
    <property type="project" value="UniProtKB"/>
</dbReference>
<dbReference type="GO" id="GO:0042273">
    <property type="term" value="P:ribosomal large subunit biogenesis"/>
    <property type="evidence" value="ECO:0000318"/>
    <property type="project" value="GO_Central"/>
</dbReference>
<dbReference type="InterPro" id="IPR007023">
    <property type="entry name" value="Ribosom_reg"/>
</dbReference>
<dbReference type="PANTHER" id="PTHR17602">
    <property type="entry name" value="RIBOSOME BIOGENESIS REGULATORY PROTEIN"/>
    <property type="match status" value="1"/>
</dbReference>
<dbReference type="PANTHER" id="PTHR17602:SF4">
    <property type="entry name" value="RIBOSOME BIOGENESIS REGULATORY PROTEIN HOMOLOG"/>
    <property type="match status" value="1"/>
</dbReference>
<dbReference type="Pfam" id="PF04939">
    <property type="entry name" value="RRS1"/>
    <property type="match status" value="1"/>
</dbReference>
<comment type="function">
    <text evidence="1">Involved in ribosomal large subunit assembly.</text>
</comment>
<comment type="subcellular location">
    <subcellularLocation>
        <location evidence="1">Nucleus</location>
        <location evidence="1">Nucleolus</location>
    </subcellularLocation>
</comment>
<comment type="similarity">
    <text evidence="3">Belongs to the RRS1 family.</text>
</comment>